<reference key="1">
    <citation type="journal article" date="1996" name="Nucleic Acids Res.">
        <title>Complete sequence analysis of the genome of the bacterium Mycoplasma pneumoniae.</title>
        <authorList>
            <person name="Himmelreich R."/>
            <person name="Hilbert H."/>
            <person name="Plagens H."/>
            <person name="Pirkl E."/>
            <person name="Li B.-C."/>
            <person name="Herrmann R."/>
        </authorList>
    </citation>
    <scope>NUCLEOTIDE SEQUENCE [LARGE SCALE GENOMIC DNA]</scope>
    <source>
        <strain>ATCC 29342 / M129 / Subtype 1</strain>
    </source>
</reference>
<accession>P75483</accession>
<organism>
    <name type="scientific">Mycoplasma pneumoniae (strain ATCC 29342 / M129 / Subtype 1)</name>
    <name type="common">Mycoplasmoides pneumoniae</name>
    <dbReference type="NCBI Taxonomy" id="272634"/>
    <lineage>
        <taxon>Bacteria</taxon>
        <taxon>Bacillati</taxon>
        <taxon>Mycoplasmatota</taxon>
        <taxon>Mycoplasmoidales</taxon>
        <taxon>Mycoplasmoidaceae</taxon>
        <taxon>Mycoplasmoides</taxon>
    </lineage>
</organism>
<name>Y294_MYCPN</name>
<protein>
    <recommendedName>
        <fullName>Uncharacterized protein MPN_294</fullName>
    </recommendedName>
</protein>
<sequence length="206" mass="23219">MDLLTTANKTPRIAKSRPVRIAIIITQKTNDLHATVPCFLWRKARYAVDLISAEAKASIMLEMGIHVRCDNTLSKTNFNQYTAAFIPHGNTTRLVEIDKLRKDLEKFVYKPKGPMRWLFSSGNGACVLKEFDLIAPDQLVTVQNEKEMVKLLGKNFIKQPVHVDKNIISCANSCGLTKFSFKVIEELSGIELARKTANLVDHIYKG</sequence>
<gene>
    <name type="ordered locus">MPN_294</name>
    <name type="ORF">H10_orf206</name>
    <name type="ORF">MP541</name>
</gene>
<proteinExistence type="predicted"/>
<dbReference type="EMBL" id="U00089">
    <property type="protein sequence ID" value="AAB96189.1"/>
    <property type="molecule type" value="Genomic_DNA"/>
</dbReference>
<dbReference type="PIR" id="S73867">
    <property type="entry name" value="S73867"/>
</dbReference>
<dbReference type="RefSeq" id="NP_109982.1">
    <property type="nucleotide sequence ID" value="NC_000912.1"/>
</dbReference>
<dbReference type="RefSeq" id="WP_010874651.1">
    <property type="nucleotide sequence ID" value="NZ_OU342337.1"/>
</dbReference>
<dbReference type="SMR" id="P75483"/>
<dbReference type="IntAct" id="P75483">
    <property type="interactions" value="1"/>
</dbReference>
<dbReference type="STRING" id="272634.MPN_294"/>
<dbReference type="DNASU" id="877198"/>
<dbReference type="EnsemblBacteria" id="AAB96189">
    <property type="protein sequence ID" value="AAB96189"/>
    <property type="gene ID" value="MPN_294"/>
</dbReference>
<dbReference type="KEGG" id="mpn:MPN_294"/>
<dbReference type="PATRIC" id="fig|272634.6.peg.318"/>
<dbReference type="HOGENOM" id="CLU_000445_44_2_14"/>
<dbReference type="OrthoDB" id="9800516at2"/>
<dbReference type="BioCyc" id="MPNE272634:G1GJ3-462-MONOMER"/>
<dbReference type="Proteomes" id="UP000000808">
    <property type="component" value="Chromosome"/>
</dbReference>
<dbReference type="CDD" id="cd03135">
    <property type="entry name" value="GATase1_DJ-1"/>
    <property type="match status" value="1"/>
</dbReference>
<dbReference type="Gene3D" id="3.40.50.880">
    <property type="match status" value="1"/>
</dbReference>
<dbReference type="InterPro" id="IPR029062">
    <property type="entry name" value="Class_I_gatase-like"/>
</dbReference>
<dbReference type="InterPro" id="IPR002818">
    <property type="entry name" value="DJ-1/PfpI"/>
</dbReference>
<dbReference type="Pfam" id="PF01965">
    <property type="entry name" value="DJ-1_PfpI"/>
    <property type="match status" value="1"/>
</dbReference>
<dbReference type="SUPFAM" id="SSF52317">
    <property type="entry name" value="Class I glutamine amidotransferase-like"/>
    <property type="match status" value="1"/>
</dbReference>
<feature type="chain" id="PRO_0000210658" description="Uncharacterized protein MPN_294">
    <location>
        <begin position="1"/>
        <end position="206"/>
    </location>
</feature>
<keyword id="KW-1185">Reference proteome</keyword>